<proteinExistence type="inferred from homology"/>
<dbReference type="EC" id="2.-.-.-"/>
<dbReference type="EMBL" id="AE016820">
    <property type="protein sequence ID" value="AAS54616.2"/>
    <property type="molecule type" value="Genomic_DNA"/>
</dbReference>
<dbReference type="RefSeq" id="NP_986792.2">
    <property type="nucleotide sequence ID" value="NM_211854.2"/>
</dbReference>
<dbReference type="SMR" id="Q74ZS2"/>
<dbReference type="FunCoup" id="Q74ZS2">
    <property type="interactions" value="676"/>
</dbReference>
<dbReference type="STRING" id="284811.Q74ZS2"/>
<dbReference type="GlyCosmos" id="Q74ZS2">
    <property type="glycosylation" value="10 sites, No reported glycans"/>
</dbReference>
<dbReference type="EnsemblFungi" id="AAS54616">
    <property type="protein sequence ID" value="AAS54616"/>
    <property type="gene ID" value="AGOS_AGR126C"/>
</dbReference>
<dbReference type="GeneID" id="4623094"/>
<dbReference type="KEGG" id="ago:AGOS_AGR126C"/>
<dbReference type="eggNOG" id="KOG2126">
    <property type="taxonomic scope" value="Eukaryota"/>
</dbReference>
<dbReference type="HOGENOM" id="CLU_004298_1_0_1"/>
<dbReference type="InParanoid" id="Q74ZS2"/>
<dbReference type="OMA" id="EDEYVIM"/>
<dbReference type="OrthoDB" id="272139at2759"/>
<dbReference type="UniPathway" id="UPA00196"/>
<dbReference type="Proteomes" id="UP000000591">
    <property type="component" value="Chromosome VII"/>
</dbReference>
<dbReference type="GO" id="GO:0005789">
    <property type="term" value="C:endoplasmic reticulum membrane"/>
    <property type="evidence" value="ECO:0000318"/>
    <property type="project" value="GO_Central"/>
</dbReference>
<dbReference type="GO" id="GO:0051377">
    <property type="term" value="F:mannose-ethanolamine phosphotransferase activity"/>
    <property type="evidence" value="ECO:0000318"/>
    <property type="project" value="GO_Central"/>
</dbReference>
<dbReference type="GO" id="GO:0071555">
    <property type="term" value="P:cell wall organization"/>
    <property type="evidence" value="ECO:0007669"/>
    <property type="project" value="UniProtKB-KW"/>
</dbReference>
<dbReference type="GO" id="GO:0006506">
    <property type="term" value="P:GPI anchor biosynthetic process"/>
    <property type="evidence" value="ECO:0000318"/>
    <property type="project" value="GO_Central"/>
</dbReference>
<dbReference type="CDD" id="cd16023">
    <property type="entry name" value="GPI_EPT_3"/>
    <property type="match status" value="1"/>
</dbReference>
<dbReference type="FunFam" id="3.40.720.10:FF:000056">
    <property type="entry name" value="Phosphatidylinositol glycan, class O"/>
    <property type="match status" value="1"/>
</dbReference>
<dbReference type="Gene3D" id="3.40.720.10">
    <property type="entry name" value="Alkaline Phosphatase, subunit A"/>
    <property type="match status" value="1"/>
</dbReference>
<dbReference type="InterPro" id="IPR017850">
    <property type="entry name" value="Alkaline_phosphatase_core_sf"/>
</dbReference>
<dbReference type="InterPro" id="IPR002591">
    <property type="entry name" value="Phosphodiest/P_Trfase"/>
</dbReference>
<dbReference type="InterPro" id="IPR037675">
    <property type="entry name" value="PIG-O_N"/>
</dbReference>
<dbReference type="InterPro" id="IPR039524">
    <property type="entry name" value="PIGO/GPI13"/>
</dbReference>
<dbReference type="PANTHER" id="PTHR23071:SF1">
    <property type="entry name" value="GPI ETHANOLAMINE PHOSPHATE TRANSFERASE 3"/>
    <property type="match status" value="1"/>
</dbReference>
<dbReference type="PANTHER" id="PTHR23071">
    <property type="entry name" value="PHOSPHATIDYLINOSITOL GLYCAN"/>
    <property type="match status" value="1"/>
</dbReference>
<dbReference type="Pfam" id="PF01663">
    <property type="entry name" value="Phosphodiest"/>
    <property type="match status" value="1"/>
</dbReference>
<dbReference type="SUPFAM" id="SSF53649">
    <property type="entry name" value="Alkaline phosphatase-like"/>
    <property type="match status" value="1"/>
</dbReference>
<gene>
    <name type="primary">GPI13</name>
    <name type="ordered locus">AGR126C</name>
</gene>
<organism>
    <name type="scientific">Eremothecium gossypii (strain ATCC 10895 / CBS 109.51 / FGSC 9923 / NRRL Y-1056)</name>
    <name type="common">Yeast</name>
    <name type="synonym">Ashbya gossypii</name>
    <dbReference type="NCBI Taxonomy" id="284811"/>
    <lineage>
        <taxon>Eukaryota</taxon>
        <taxon>Fungi</taxon>
        <taxon>Dikarya</taxon>
        <taxon>Ascomycota</taxon>
        <taxon>Saccharomycotina</taxon>
        <taxon>Saccharomycetes</taxon>
        <taxon>Saccharomycetales</taxon>
        <taxon>Saccharomycetaceae</taxon>
        <taxon>Eremothecium</taxon>
    </lineage>
</organism>
<name>GPI13_EREGS</name>
<feature type="chain" id="PRO_0000240362" description="GPI ethanolamine phosphate transferase 3">
    <location>
        <begin position="1"/>
        <end position="1013"/>
    </location>
</feature>
<feature type="transmembrane region" description="Helical" evidence="2">
    <location>
        <begin position="41"/>
        <end position="61"/>
    </location>
</feature>
<feature type="transmembrane region" description="Helical" evidence="2">
    <location>
        <begin position="447"/>
        <end position="467"/>
    </location>
</feature>
<feature type="transmembrane region" description="Helical" evidence="2">
    <location>
        <begin position="484"/>
        <end position="504"/>
    </location>
</feature>
<feature type="transmembrane region" description="Helical" evidence="2">
    <location>
        <begin position="515"/>
        <end position="535"/>
    </location>
</feature>
<feature type="transmembrane region" description="Helical" evidence="2">
    <location>
        <begin position="558"/>
        <end position="578"/>
    </location>
</feature>
<feature type="transmembrane region" description="Helical" evidence="2">
    <location>
        <begin position="582"/>
        <end position="602"/>
    </location>
</feature>
<feature type="transmembrane region" description="Helical" evidence="2">
    <location>
        <begin position="643"/>
        <end position="663"/>
    </location>
</feature>
<feature type="transmembrane region" description="Helical" evidence="2">
    <location>
        <begin position="682"/>
        <end position="702"/>
    </location>
</feature>
<feature type="transmembrane region" description="Helical" evidence="2">
    <location>
        <begin position="715"/>
        <end position="735"/>
    </location>
</feature>
<feature type="transmembrane region" description="Helical" evidence="2">
    <location>
        <begin position="761"/>
        <end position="781"/>
    </location>
</feature>
<feature type="transmembrane region" description="Helical" evidence="2">
    <location>
        <begin position="802"/>
        <end position="822"/>
    </location>
</feature>
<feature type="transmembrane region" description="Helical" evidence="2">
    <location>
        <begin position="825"/>
        <end position="845"/>
    </location>
</feature>
<feature type="transmembrane region" description="Helical" evidence="2">
    <location>
        <begin position="868"/>
        <end position="888"/>
    </location>
</feature>
<feature type="transmembrane region" description="Helical" evidence="2">
    <location>
        <begin position="899"/>
        <end position="919"/>
    </location>
</feature>
<feature type="transmembrane region" description="Helical" evidence="2">
    <location>
        <begin position="943"/>
        <end position="963"/>
    </location>
</feature>
<feature type="transmembrane region" description="Helical" evidence="2">
    <location>
        <begin position="977"/>
        <end position="997"/>
    </location>
</feature>
<feature type="glycosylation site" description="N-linked (GlcNAc...) asparagine" evidence="2">
    <location>
        <position position="184"/>
    </location>
</feature>
<feature type="glycosylation site" description="N-linked (GlcNAc...) asparagine" evidence="2">
    <location>
        <position position="205"/>
    </location>
</feature>
<feature type="glycosylation site" description="N-linked (GlcNAc...) asparagine" evidence="2">
    <location>
        <position position="336"/>
    </location>
</feature>
<feature type="glycosylation site" description="N-linked (GlcNAc...) asparagine" evidence="2">
    <location>
        <position position="399"/>
    </location>
</feature>
<feature type="glycosylation site" description="N-linked (GlcNAc...) asparagine" evidence="2">
    <location>
        <position position="423"/>
    </location>
</feature>
<feature type="glycosylation site" description="N-linked (GlcNAc...) asparagine" evidence="2">
    <location>
        <position position="539"/>
    </location>
</feature>
<feature type="glycosylation site" description="N-linked (GlcNAc...) asparagine" evidence="2">
    <location>
        <position position="707"/>
    </location>
</feature>
<feature type="glycosylation site" description="N-linked (GlcNAc...) asparagine" evidence="2">
    <location>
        <position position="742"/>
    </location>
</feature>
<feature type="glycosylation site" description="N-linked (GlcNAc...) asparagine" evidence="2">
    <location>
        <position position="750"/>
    </location>
</feature>
<feature type="glycosylation site" description="N-linked (GlcNAc...) asparagine" evidence="2">
    <location>
        <position position="755"/>
    </location>
</feature>
<protein>
    <recommendedName>
        <fullName>GPI ethanolamine phosphate transferase 3</fullName>
        <ecNumber>2.-.-.-</ecNumber>
    </recommendedName>
    <alternativeName>
        <fullName>Glycosylphosphatidylinositol-anchor biosynthesis protein 13</fullName>
    </alternativeName>
</protein>
<comment type="function">
    <text evidence="1">Involved in glycosylphosphatidylinositol-anchor biosynthesis. Transfers ethanolamine phosphate to the GPI third mannose which links the GPI-anchor to the C-terminus of the proteins by an amide bond. Involved in cell wall biosynthesis (By similarity).</text>
</comment>
<comment type="pathway">
    <text>Glycolipid biosynthesis; glycosylphosphatidylinositol-anchor biosynthesis.</text>
</comment>
<comment type="subcellular location">
    <subcellularLocation>
        <location evidence="1">Endoplasmic reticulum membrane</location>
        <topology evidence="1">Multi-pass membrane protein</topology>
    </subcellularLocation>
</comment>
<comment type="similarity">
    <text evidence="3">Belongs to the PIGG/PIGN/PIGO family. PIGO subfamily.</text>
</comment>
<sequence>MQEQIEGAVDEELLKQSVLNNDEDDRRLTKLRIERFRTTHTLYIFLYSALAALQFIAIAFFTRGFLLSRKVLDDVANRDESTAPAKFDRLVLLVVDALRFDFVIPVDVAAEGYNSHYHNHLRALYERWDESILLKFLADPPTTTLQRLKGLTTGSLPTFIDAGSNFNGDVIDEDNIIKQMCLNNKTIYFAGDDTWDALFHPYLSNVSMPYESLNVWDLDTVDNGVISFFEDHLLNNPTEKKEWDVLVGHMLGIDHVGHKYGPSHFSMAEKQSQVDGFIRQIIDAVDEDTLLVVMGDHGMDHTGNHGGDSPAELESTLWLYTKRPGTWRRQAPAAYNTTELGRYYRAVNQIDLVPSLSLLLGLPIPFNNLGWPIEELAHDDDEWRLFTRQTLMQLETYRNTSNSITDSSKLKILEELKINANSNSSDAGNYQAILLEMYKDLWARFDYYSIGTGIILLIISLAMLITITRLIPSIVVGQMLSELVPTIIVMPLVSNVCFLGVFYVLRQPAFLQNWLWASLLATAVGIIIGFYVPIFDRYNLTWLVLRFGEELSDYWSRVAAFLITLHALIFTSNSFTIWEDKIVSFSLTTLGMLTLYEFVFLPKRHSTSAILAAALGEKEGTVSGISSGQANSDSLPLGRFARIVGGYHSIVLIVCTRLASLITICREEQGAYCTPTFTLTNNYSFSVMLGCLFLVFATPACIKGYYNVSSSYQAAAPIWIGMLMKSILFVNFIYWELKTFENTSDTHGLNLTIFNLTISRIVVGVSLVAANIGWMMGPLCIKLNVHNNDRRSQQATILGYANAYGAQYFLLVINFFMCILLFNKPLAQLSLFLMCNQLLSILEIFDLLKLKENLIGPVALGLLSYQQFFSTGHQATIPAVQWDMGFILTERITFPFTHLGIVLNTFGPHILCGISVALLTLWKQPPGILRANTLLARVVSNCGMLLIYQTVLCLSTFIWVTNFRRHLMVWKIFCPRFMFAALSLIVTQLVLTFITIAFASGRLIKQIDRMFWK</sequence>
<keyword id="KW-0961">Cell wall biogenesis/degradation</keyword>
<keyword id="KW-0256">Endoplasmic reticulum</keyword>
<keyword id="KW-0325">Glycoprotein</keyword>
<keyword id="KW-0337">GPI-anchor biosynthesis</keyword>
<keyword id="KW-0472">Membrane</keyword>
<keyword id="KW-1185">Reference proteome</keyword>
<keyword id="KW-0808">Transferase</keyword>
<keyword id="KW-0812">Transmembrane</keyword>
<keyword id="KW-1133">Transmembrane helix</keyword>
<evidence type="ECO:0000250" key="1"/>
<evidence type="ECO:0000255" key="2"/>
<evidence type="ECO:0000305" key="3"/>
<accession>Q74ZS2</accession>
<reference key="1">
    <citation type="journal article" date="2004" name="Science">
        <title>The Ashbya gossypii genome as a tool for mapping the ancient Saccharomyces cerevisiae genome.</title>
        <authorList>
            <person name="Dietrich F.S."/>
            <person name="Voegeli S."/>
            <person name="Brachat S."/>
            <person name="Lerch A."/>
            <person name="Gates K."/>
            <person name="Steiner S."/>
            <person name="Mohr C."/>
            <person name="Poehlmann R."/>
            <person name="Luedi P."/>
            <person name="Choi S."/>
            <person name="Wing R.A."/>
            <person name="Flavier A."/>
            <person name="Gaffney T.D."/>
            <person name="Philippsen P."/>
        </authorList>
    </citation>
    <scope>NUCLEOTIDE SEQUENCE [LARGE SCALE GENOMIC DNA]</scope>
    <source>
        <strain>ATCC 10895 / CBS 109.51 / FGSC 9923 / NRRL Y-1056</strain>
    </source>
</reference>
<reference key="2">
    <citation type="journal article" date="2013" name="G3 (Bethesda)">
        <title>Genomes of Ashbya fungi isolated from insects reveal four mating-type loci, numerous translocations, lack of transposons, and distinct gene duplications.</title>
        <authorList>
            <person name="Dietrich F.S."/>
            <person name="Voegeli S."/>
            <person name="Kuo S."/>
            <person name="Philippsen P."/>
        </authorList>
    </citation>
    <scope>GENOME REANNOTATION</scope>
    <scope>SEQUENCE REVISION TO 169; 174-175 AND 183</scope>
    <source>
        <strain>ATCC 10895 / CBS 109.51 / FGSC 9923 / NRRL Y-1056</strain>
    </source>
</reference>